<gene>
    <name evidence="1" type="primary">cysS</name>
    <name type="ordered locus">CHAB381_0579</name>
</gene>
<evidence type="ECO:0000255" key="1">
    <source>
        <dbReference type="HAMAP-Rule" id="MF_00041"/>
    </source>
</evidence>
<proteinExistence type="inferred from homology"/>
<organism>
    <name type="scientific">Campylobacter hominis (strain ATCC BAA-381 / DSM 21671 / CCUG 45161 / LMG 19568 / NCTC 13146 / CH001A)</name>
    <dbReference type="NCBI Taxonomy" id="360107"/>
    <lineage>
        <taxon>Bacteria</taxon>
        <taxon>Pseudomonadati</taxon>
        <taxon>Campylobacterota</taxon>
        <taxon>Epsilonproteobacteria</taxon>
        <taxon>Campylobacterales</taxon>
        <taxon>Campylobacteraceae</taxon>
        <taxon>Campylobacter</taxon>
    </lineage>
</organism>
<name>SYC_CAMHC</name>
<sequence length="468" mass="53593">MVIFDSVVKKKLEFIPLENDFVRIYVCGPTVYDDAHLGHAKSAISFDLLRRTLVALGFKVKFVKNFTDIDDKILKKMEDSGKSLKEITEFYISRYLDDMNALNVLRADIEPRATECIDEIIEFVEELLDNGAAYKIQGDGIYFDTSKDSDYLSLSGKKDSDENIARVASNAQKKDEKDFALWKFDEKYYKAKFGCGRPGWHTECVVMIKKYLTDNKQKYLIDIHAGGMDLLFPHHENEAAQCRCAEHKNLAKYWMHNGFVQVNNEKMSKSLGNSFFIKDALKIVPGEALRFYLMSSHYRANFNYSVNDLFSSKKRLDKIYRLKKRLQGAKKGISDEKFKAEILDALSDDLNTSLALSIVDSMVNSANERLDKNPKDKMKKGEILANLDFVKETLGILYTDENLYFQFGVSETKKAEISDLIAQRDAAKKEKNFALADEIREKLALQNITLMDTPNGTVWEISNETDIK</sequence>
<comment type="catalytic activity">
    <reaction evidence="1">
        <text>tRNA(Cys) + L-cysteine + ATP = L-cysteinyl-tRNA(Cys) + AMP + diphosphate</text>
        <dbReference type="Rhea" id="RHEA:17773"/>
        <dbReference type="Rhea" id="RHEA-COMP:9661"/>
        <dbReference type="Rhea" id="RHEA-COMP:9679"/>
        <dbReference type="ChEBI" id="CHEBI:30616"/>
        <dbReference type="ChEBI" id="CHEBI:33019"/>
        <dbReference type="ChEBI" id="CHEBI:35235"/>
        <dbReference type="ChEBI" id="CHEBI:78442"/>
        <dbReference type="ChEBI" id="CHEBI:78517"/>
        <dbReference type="ChEBI" id="CHEBI:456215"/>
        <dbReference type="EC" id="6.1.1.16"/>
    </reaction>
</comment>
<comment type="cofactor">
    <cofactor evidence="1">
        <name>Zn(2+)</name>
        <dbReference type="ChEBI" id="CHEBI:29105"/>
    </cofactor>
    <text evidence="1">Binds 1 zinc ion per subunit.</text>
</comment>
<comment type="subunit">
    <text evidence="1">Monomer.</text>
</comment>
<comment type="subcellular location">
    <subcellularLocation>
        <location evidence="1">Cytoplasm</location>
    </subcellularLocation>
</comment>
<comment type="similarity">
    <text evidence="1">Belongs to the class-I aminoacyl-tRNA synthetase family.</text>
</comment>
<dbReference type="EC" id="6.1.1.16" evidence="1"/>
<dbReference type="EMBL" id="CP000776">
    <property type="protein sequence ID" value="ABS51418.1"/>
    <property type="molecule type" value="Genomic_DNA"/>
</dbReference>
<dbReference type="RefSeq" id="WP_012108454.1">
    <property type="nucleotide sequence ID" value="NC_009714.1"/>
</dbReference>
<dbReference type="SMR" id="A7I0X6"/>
<dbReference type="STRING" id="360107.CHAB381_0579"/>
<dbReference type="KEGG" id="cha:CHAB381_0579"/>
<dbReference type="eggNOG" id="COG0215">
    <property type="taxonomic scope" value="Bacteria"/>
</dbReference>
<dbReference type="HOGENOM" id="CLU_013528_0_1_7"/>
<dbReference type="OrthoDB" id="9815130at2"/>
<dbReference type="Proteomes" id="UP000002407">
    <property type="component" value="Chromosome"/>
</dbReference>
<dbReference type="GO" id="GO:0005829">
    <property type="term" value="C:cytosol"/>
    <property type="evidence" value="ECO:0007669"/>
    <property type="project" value="TreeGrafter"/>
</dbReference>
<dbReference type="GO" id="GO:0005524">
    <property type="term" value="F:ATP binding"/>
    <property type="evidence" value="ECO:0007669"/>
    <property type="project" value="UniProtKB-UniRule"/>
</dbReference>
<dbReference type="GO" id="GO:0004817">
    <property type="term" value="F:cysteine-tRNA ligase activity"/>
    <property type="evidence" value="ECO:0007669"/>
    <property type="project" value="UniProtKB-UniRule"/>
</dbReference>
<dbReference type="GO" id="GO:0008270">
    <property type="term" value="F:zinc ion binding"/>
    <property type="evidence" value="ECO:0007669"/>
    <property type="project" value="UniProtKB-UniRule"/>
</dbReference>
<dbReference type="GO" id="GO:0006423">
    <property type="term" value="P:cysteinyl-tRNA aminoacylation"/>
    <property type="evidence" value="ECO:0007669"/>
    <property type="project" value="UniProtKB-UniRule"/>
</dbReference>
<dbReference type="CDD" id="cd00672">
    <property type="entry name" value="CysRS_core"/>
    <property type="match status" value="1"/>
</dbReference>
<dbReference type="Gene3D" id="1.20.120.1910">
    <property type="entry name" value="Cysteine-tRNA ligase, C-terminal anti-codon recognition domain"/>
    <property type="match status" value="1"/>
</dbReference>
<dbReference type="Gene3D" id="3.40.50.620">
    <property type="entry name" value="HUPs"/>
    <property type="match status" value="1"/>
</dbReference>
<dbReference type="HAMAP" id="MF_00041">
    <property type="entry name" value="Cys_tRNA_synth"/>
    <property type="match status" value="1"/>
</dbReference>
<dbReference type="InterPro" id="IPR015803">
    <property type="entry name" value="Cys-tRNA-ligase"/>
</dbReference>
<dbReference type="InterPro" id="IPR015273">
    <property type="entry name" value="Cys-tRNA-synt_Ia_DALR"/>
</dbReference>
<dbReference type="InterPro" id="IPR024909">
    <property type="entry name" value="Cys-tRNA/MSH_ligase"/>
</dbReference>
<dbReference type="InterPro" id="IPR014729">
    <property type="entry name" value="Rossmann-like_a/b/a_fold"/>
</dbReference>
<dbReference type="InterPro" id="IPR032678">
    <property type="entry name" value="tRNA-synt_1_cat_dom"/>
</dbReference>
<dbReference type="InterPro" id="IPR009080">
    <property type="entry name" value="tRNAsynth_Ia_anticodon-bd"/>
</dbReference>
<dbReference type="NCBIfam" id="TIGR00435">
    <property type="entry name" value="cysS"/>
    <property type="match status" value="1"/>
</dbReference>
<dbReference type="PANTHER" id="PTHR10890:SF3">
    <property type="entry name" value="CYSTEINE--TRNA LIGASE, CYTOPLASMIC"/>
    <property type="match status" value="1"/>
</dbReference>
<dbReference type="PANTHER" id="PTHR10890">
    <property type="entry name" value="CYSTEINYL-TRNA SYNTHETASE"/>
    <property type="match status" value="1"/>
</dbReference>
<dbReference type="Pfam" id="PF09190">
    <property type="entry name" value="DALR_2"/>
    <property type="match status" value="1"/>
</dbReference>
<dbReference type="Pfam" id="PF01406">
    <property type="entry name" value="tRNA-synt_1e"/>
    <property type="match status" value="1"/>
</dbReference>
<dbReference type="PRINTS" id="PR00983">
    <property type="entry name" value="TRNASYNTHCYS"/>
</dbReference>
<dbReference type="SMART" id="SM00840">
    <property type="entry name" value="DALR_2"/>
    <property type="match status" value="1"/>
</dbReference>
<dbReference type="SUPFAM" id="SSF47323">
    <property type="entry name" value="Anticodon-binding domain of a subclass of class I aminoacyl-tRNA synthetases"/>
    <property type="match status" value="1"/>
</dbReference>
<dbReference type="SUPFAM" id="SSF52374">
    <property type="entry name" value="Nucleotidylyl transferase"/>
    <property type="match status" value="1"/>
</dbReference>
<feature type="chain" id="PRO_1000006578" description="Cysteine--tRNA ligase">
    <location>
        <begin position="1"/>
        <end position="468"/>
    </location>
</feature>
<feature type="short sequence motif" description="'HIGH' region">
    <location>
        <begin position="29"/>
        <end position="39"/>
    </location>
</feature>
<feature type="short sequence motif" description="'KMSKS' region">
    <location>
        <begin position="266"/>
        <end position="270"/>
    </location>
</feature>
<feature type="binding site" evidence="1">
    <location>
        <position position="27"/>
    </location>
    <ligand>
        <name>Zn(2+)</name>
        <dbReference type="ChEBI" id="CHEBI:29105"/>
    </ligand>
</feature>
<feature type="binding site" evidence="1">
    <location>
        <position position="204"/>
    </location>
    <ligand>
        <name>Zn(2+)</name>
        <dbReference type="ChEBI" id="CHEBI:29105"/>
    </ligand>
</feature>
<feature type="binding site" evidence="1">
    <location>
        <position position="234"/>
    </location>
    <ligand>
        <name>Zn(2+)</name>
        <dbReference type="ChEBI" id="CHEBI:29105"/>
    </ligand>
</feature>
<feature type="binding site" evidence="1">
    <location>
        <position position="238"/>
    </location>
    <ligand>
        <name>Zn(2+)</name>
        <dbReference type="ChEBI" id="CHEBI:29105"/>
    </ligand>
</feature>
<feature type="binding site" evidence="1">
    <location>
        <position position="269"/>
    </location>
    <ligand>
        <name>ATP</name>
        <dbReference type="ChEBI" id="CHEBI:30616"/>
    </ligand>
</feature>
<accession>A7I0X6</accession>
<keyword id="KW-0030">Aminoacyl-tRNA synthetase</keyword>
<keyword id="KW-0067">ATP-binding</keyword>
<keyword id="KW-0963">Cytoplasm</keyword>
<keyword id="KW-0436">Ligase</keyword>
<keyword id="KW-0479">Metal-binding</keyword>
<keyword id="KW-0547">Nucleotide-binding</keyword>
<keyword id="KW-0648">Protein biosynthesis</keyword>
<keyword id="KW-1185">Reference proteome</keyword>
<keyword id="KW-0862">Zinc</keyword>
<protein>
    <recommendedName>
        <fullName evidence="1">Cysteine--tRNA ligase</fullName>
        <ecNumber evidence="1">6.1.1.16</ecNumber>
    </recommendedName>
    <alternativeName>
        <fullName evidence="1">Cysteinyl-tRNA synthetase</fullName>
        <shortName evidence="1">CysRS</shortName>
    </alternativeName>
</protein>
<reference key="1">
    <citation type="submission" date="2007-07" db="EMBL/GenBank/DDBJ databases">
        <title>Complete genome sequence of Campylobacter hominis ATCC BAA-381, a commensal isolated from the human gastrointestinal tract.</title>
        <authorList>
            <person name="Fouts D.E."/>
            <person name="Mongodin E.F."/>
            <person name="Puiu D."/>
            <person name="Sebastian Y."/>
            <person name="Miller W.G."/>
            <person name="Mandrell R.E."/>
            <person name="Nelson K.E."/>
        </authorList>
    </citation>
    <scope>NUCLEOTIDE SEQUENCE [LARGE SCALE GENOMIC DNA]</scope>
    <source>
        <strain>ATCC BAA-381 / DSM 21671 / CCUG 45161 / LMG 19568 / NCTC 13146 / CH001A</strain>
    </source>
</reference>